<comment type="function">
    <text evidence="1">Activates insulin and somatostatin gene transcription. Key regulator of islet peptide hormone expression but also responsible for the development of the pancreas, most probably by determining maturation and differentiation of common pancreatic precursor cells in the developing gut. As part of a PDX1:PBX1b:MEIS2b complex in pancreatic acinar cells is involved in the transcriptional activation of the ELA1 enhancer; the complex binds to the enhancer B element and cooperates with the transcription factor 1 complex (PTF1) bound to the enhancer A element. Binds the DNA sequence 5'-CC[CT]TAATGGG-3' (By similarity).</text>
</comment>
<comment type="subunit">
    <text evidence="1">Interacts with the basic helix-loop-helix domains of TCF3(E47) and NEUROD1 and with HMG-I(Y). Interacts with SPOP and the methyltransferase SETD7. Part of a PDX1:PBX1b:MEIS2b complex (By similarity).</text>
</comment>
<comment type="subcellular location">
    <subcellularLocation>
        <location evidence="4">Nucleus</location>
    </subcellularLocation>
    <subcellularLocation>
        <location evidence="1">Cytoplasm</location>
        <location evidence="1">Cytosol</location>
    </subcellularLocation>
</comment>
<comment type="tissue specificity">
    <text>Pancreas; islet beta-cells.</text>
</comment>
<comment type="domain">
    <text evidence="1">The Antp-type hexapeptide mediates heterodimerization with PBX on a regulatory element of the somatostatin promoter.</text>
</comment>
<comment type="domain">
    <text evidence="1">The homeodomain, which contains the nuclear localization signal, not only mediates DNA-binding, but also acts as a protein-protein interaction domain for TCF3(E47), NEUROD1 and HMG-I(Y).</text>
</comment>
<comment type="PTM">
    <text evidence="1">Phosphorylated by the SAPK2 pathway at high intracellular glucose concentration. Phosphorylated by HIPK2 on Ser-268 upon glucose accumulation. This phosphorylation mediates subnuclear localization shifting. Phosphorylation by PASK may lead to translocation into the cytosol (By similarity).</text>
</comment>
<comment type="similarity">
    <text evidence="6">Belongs to the Antp homeobox family. IPF1/XlHbox-8 subfamily.</text>
</comment>
<sequence length="283" mass="30819">MNGEEQYYAATQLYKDPCAFQRGPVPEFSANPPACLYMGRQPPPPPPPQFAGALGTLEQGSPPDISPYEVPPLAEDPAVAHLHHHLPAQLGLAHPPSGPFPNGTEPGGLEEPSRGQLPFPWMKSTKAHAWKGQWAGGAYAVEPEENKRTRTAYTRAQLLELEKEFLFNKYISRPRRVELAVMLNLTERHIKIWFQNRRMKWKKEEDKKRSSGTASGGVGGDEPEQDSAVTSGEELLALPPPPPPGGAVPPGVPAAAREGRLPPGLSASPQPSSIAPRRPQEPR</sequence>
<dbReference type="EMBL" id="U73854">
    <property type="protein sequence ID" value="AAB18252.1"/>
    <property type="molecule type" value="mRNA"/>
</dbReference>
<dbReference type="RefSeq" id="NP_001297509.1">
    <property type="nucleotide sequence ID" value="NM_001310580.1"/>
</dbReference>
<dbReference type="PDB" id="2H1K">
    <property type="method" value="X-ray"/>
    <property type="resolution" value="2.42 A"/>
    <property type="chains" value="A/B=146-206"/>
</dbReference>
<dbReference type="PDB" id="6F8G">
    <property type="method" value="X-ray"/>
    <property type="resolution" value="2.03 A"/>
    <property type="chains" value="E/F/G/H=222-233"/>
</dbReference>
<dbReference type="PDBsum" id="2H1K"/>
<dbReference type="PDBsum" id="6F8G"/>
<dbReference type="SMR" id="P70118"/>
<dbReference type="STRING" id="10036.ENSMAUP00000024122"/>
<dbReference type="GeneID" id="101841656"/>
<dbReference type="KEGG" id="maua:101841656"/>
<dbReference type="CTD" id="3651"/>
<dbReference type="eggNOG" id="KOG0489">
    <property type="taxonomic scope" value="Eukaryota"/>
</dbReference>
<dbReference type="OrthoDB" id="6159439at2759"/>
<dbReference type="EvolutionaryTrace" id="P70118"/>
<dbReference type="Proteomes" id="UP000189706">
    <property type="component" value="Unplaced"/>
</dbReference>
<dbReference type="GO" id="GO:0005829">
    <property type="term" value="C:cytosol"/>
    <property type="evidence" value="ECO:0007669"/>
    <property type="project" value="UniProtKB-SubCell"/>
</dbReference>
<dbReference type="GO" id="GO:0005634">
    <property type="term" value="C:nucleus"/>
    <property type="evidence" value="ECO:0007669"/>
    <property type="project" value="UniProtKB-SubCell"/>
</dbReference>
<dbReference type="GO" id="GO:0000981">
    <property type="term" value="F:DNA-binding transcription factor activity, RNA polymerase II-specific"/>
    <property type="evidence" value="ECO:0007669"/>
    <property type="project" value="InterPro"/>
</dbReference>
<dbReference type="GO" id="GO:0000978">
    <property type="term" value="F:RNA polymerase II cis-regulatory region sequence-specific DNA binding"/>
    <property type="evidence" value="ECO:0007669"/>
    <property type="project" value="TreeGrafter"/>
</dbReference>
<dbReference type="GO" id="GO:0032024">
    <property type="term" value="P:positive regulation of insulin secretion"/>
    <property type="evidence" value="ECO:0000250"/>
    <property type="project" value="UniProtKB"/>
</dbReference>
<dbReference type="GO" id="GO:0045944">
    <property type="term" value="P:positive regulation of transcription by RNA polymerase II"/>
    <property type="evidence" value="ECO:0007669"/>
    <property type="project" value="UniProtKB-ARBA"/>
</dbReference>
<dbReference type="GO" id="GO:0003309">
    <property type="term" value="P:type B pancreatic cell differentiation"/>
    <property type="evidence" value="ECO:0007669"/>
    <property type="project" value="TreeGrafter"/>
</dbReference>
<dbReference type="CDD" id="cd00086">
    <property type="entry name" value="homeodomain"/>
    <property type="match status" value="1"/>
</dbReference>
<dbReference type="FunFam" id="1.10.10.60:FF:000176">
    <property type="entry name" value="pancreas/duodenum homeobox protein 1"/>
    <property type="match status" value="1"/>
</dbReference>
<dbReference type="Gene3D" id="1.10.10.60">
    <property type="entry name" value="Homeodomain-like"/>
    <property type="match status" value="1"/>
</dbReference>
<dbReference type="InterPro" id="IPR001356">
    <property type="entry name" value="HD"/>
</dbReference>
<dbReference type="InterPro" id="IPR020479">
    <property type="entry name" value="HD_metazoa"/>
</dbReference>
<dbReference type="InterPro" id="IPR017995">
    <property type="entry name" value="Homeobox_antennapedia"/>
</dbReference>
<dbReference type="InterPro" id="IPR017970">
    <property type="entry name" value="Homeobox_CS"/>
</dbReference>
<dbReference type="InterPro" id="IPR009057">
    <property type="entry name" value="Homeodomain-like_sf"/>
</dbReference>
<dbReference type="PANTHER" id="PTHR45664:SF12">
    <property type="entry name" value="PANCREAS_DUODENUM HOMEOBOX PROTEIN 1"/>
    <property type="match status" value="1"/>
</dbReference>
<dbReference type="PANTHER" id="PTHR45664">
    <property type="entry name" value="PROTEIN ZERKNUELLT 1-RELATED"/>
    <property type="match status" value="1"/>
</dbReference>
<dbReference type="Pfam" id="PF00046">
    <property type="entry name" value="Homeodomain"/>
    <property type="match status" value="1"/>
</dbReference>
<dbReference type="PRINTS" id="PR00025">
    <property type="entry name" value="ANTENNAPEDIA"/>
</dbReference>
<dbReference type="PRINTS" id="PR00024">
    <property type="entry name" value="HOMEOBOX"/>
</dbReference>
<dbReference type="SMART" id="SM00389">
    <property type="entry name" value="HOX"/>
    <property type="match status" value="1"/>
</dbReference>
<dbReference type="SUPFAM" id="SSF46689">
    <property type="entry name" value="Homeodomain-like"/>
    <property type="match status" value="1"/>
</dbReference>
<dbReference type="PROSITE" id="PS00027">
    <property type="entry name" value="HOMEOBOX_1"/>
    <property type="match status" value="1"/>
</dbReference>
<dbReference type="PROSITE" id="PS50071">
    <property type="entry name" value="HOMEOBOX_2"/>
    <property type="match status" value="1"/>
</dbReference>
<keyword id="KW-0002">3D-structure</keyword>
<keyword id="KW-0010">Activator</keyword>
<keyword id="KW-0963">Cytoplasm</keyword>
<keyword id="KW-0238">DNA-binding</keyword>
<keyword id="KW-0371">Homeobox</keyword>
<keyword id="KW-0539">Nucleus</keyword>
<keyword id="KW-0597">Phosphoprotein</keyword>
<keyword id="KW-1185">Reference proteome</keyword>
<keyword id="KW-0804">Transcription</keyword>
<keyword id="KW-0805">Transcription regulation</keyword>
<evidence type="ECO:0000250" key="1"/>
<evidence type="ECO:0000250" key="2">
    <source>
        <dbReference type="UniProtKB" id="P52945"/>
    </source>
</evidence>
<evidence type="ECO:0000250" key="3">
    <source>
        <dbReference type="UniProtKB" id="P52946"/>
    </source>
</evidence>
<evidence type="ECO:0000255" key="4">
    <source>
        <dbReference type="PROSITE-ProRule" id="PRU00108"/>
    </source>
</evidence>
<evidence type="ECO:0000256" key="5">
    <source>
        <dbReference type="SAM" id="MobiDB-lite"/>
    </source>
</evidence>
<evidence type="ECO:0000305" key="6"/>
<evidence type="ECO:0007829" key="7">
    <source>
        <dbReference type="PDB" id="2H1K"/>
    </source>
</evidence>
<protein>
    <recommendedName>
        <fullName>Pancreas/duodenum homeobox protein 1</fullName>
    </recommendedName>
    <alternativeName>
        <fullName>Homeodomain protein PDX1</fullName>
    </alternativeName>
    <alternativeName>
        <fullName>Insulin promoter factor 1</fullName>
        <shortName>IPF-1</shortName>
    </alternativeName>
</protein>
<organism>
    <name type="scientific">Mesocricetus auratus</name>
    <name type="common">Golden hamster</name>
    <dbReference type="NCBI Taxonomy" id="10036"/>
    <lineage>
        <taxon>Eukaryota</taxon>
        <taxon>Metazoa</taxon>
        <taxon>Chordata</taxon>
        <taxon>Craniata</taxon>
        <taxon>Vertebrata</taxon>
        <taxon>Euteleostomi</taxon>
        <taxon>Mammalia</taxon>
        <taxon>Eutheria</taxon>
        <taxon>Euarchontoglires</taxon>
        <taxon>Glires</taxon>
        <taxon>Rodentia</taxon>
        <taxon>Myomorpha</taxon>
        <taxon>Muroidea</taxon>
        <taxon>Cricetidae</taxon>
        <taxon>Cricetinae</taxon>
        <taxon>Mesocricetus</taxon>
    </lineage>
</organism>
<gene>
    <name type="primary">PDX1</name>
    <name type="synonym">IPF1</name>
</gene>
<name>PDX1_MESAU</name>
<reference key="1">
    <citation type="submission" date="1996-10" db="EMBL/GenBank/DDBJ databases">
        <authorList>
            <person name="Rudnick A."/>
            <person name="Ling T.Y."/>
            <person name="Odagiri H."/>
            <person name="Rutter W.J."/>
            <person name="German M.S."/>
        </authorList>
    </citation>
    <scope>NUCLEOTIDE SEQUENCE [MRNA]</scope>
</reference>
<feature type="chain" id="PRO_0000049148" description="Pancreas/duodenum homeobox protein 1">
    <location>
        <begin position="1"/>
        <end position="283"/>
    </location>
</feature>
<feature type="DNA-binding region" description="Homeobox" evidence="4">
    <location>
        <begin position="146"/>
        <end position="205"/>
    </location>
</feature>
<feature type="region of interest" description="Transactivation domain" evidence="1">
    <location>
        <begin position="13"/>
        <end position="73"/>
    </location>
</feature>
<feature type="region of interest" description="Disordered" evidence="5">
    <location>
        <begin position="36"/>
        <end position="66"/>
    </location>
</feature>
<feature type="region of interest" description="Disordered" evidence="5">
    <location>
        <begin position="201"/>
        <end position="283"/>
    </location>
</feature>
<feature type="short sequence motif" description="Antp-type hexapeptide">
    <location>
        <begin position="118"/>
        <end position="123"/>
    </location>
</feature>
<feature type="short sequence motif" description="Nuclear localization signal" evidence="1">
    <location>
        <begin position="197"/>
        <end position="203"/>
    </location>
</feature>
<feature type="compositionally biased region" description="Pro residues" evidence="5">
    <location>
        <begin position="238"/>
        <end position="252"/>
    </location>
</feature>
<feature type="modified residue" description="Phosphothreonine; by PASK" evidence="3">
    <location>
        <position position="151"/>
    </location>
</feature>
<feature type="modified residue" description="Phosphoserine; by HIPK2" evidence="2">
    <location>
        <position position="268"/>
    </location>
</feature>
<feature type="helix" evidence="7">
    <location>
        <begin position="155"/>
        <end position="167"/>
    </location>
</feature>
<feature type="helix" evidence="7">
    <location>
        <begin position="173"/>
        <end position="183"/>
    </location>
</feature>
<feature type="helix" evidence="7">
    <location>
        <begin position="187"/>
        <end position="204"/>
    </location>
</feature>
<accession>P70118</accession>
<proteinExistence type="evidence at protein level"/>